<feature type="chain" id="PRO_0000198980" description="Nucleoid occlusion factor SlmA">
    <location>
        <begin position="1"/>
        <end position="198"/>
    </location>
</feature>
<feature type="domain" description="HTH tetR-type" evidence="1">
    <location>
        <begin position="10"/>
        <end position="70"/>
    </location>
</feature>
<feature type="DNA-binding region" description="H-T-H motif" evidence="1">
    <location>
        <begin position="33"/>
        <end position="52"/>
    </location>
</feature>
<feature type="coiled-coil region" evidence="1">
    <location>
        <begin position="117"/>
        <end position="144"/>
    </location>
</feature>
<feature type="sequence conflict" description="In Ref. 1; AAF64285." evidence="2" ref="1">
    <original>NTST</original>
    <variation>DTTA</variation>
    <location>
        <begin position="83"/>
        <end position="86"/>
    </location>
</feature>
<feature type="sequence conflict" description="In Ref. 1; AAF64285." evidence="2" ref="1">
    <original>I</original>
    <variation>L</variation>
    <location>
        <position position="95"/>
    </location>
</feature>
<feature type="sequence conflict" description="In Ref. 1; AAF64285." evidence="2" ref="1">
    <original>N</original>
    <variation>T</variation>
    <location>
        <position position="156"/>
    </location>
</feature>
<feature type="sequence conflict" description="In Ref. 1; AAF64285." evidence="2" ref="1">
    <original>L</original>
    <variation>I</variation>
    <location>
        <position position="162"/>
    </location>
</feature>
<feature type="sequence conflict" description="In Ref. 1; AAF64285." evidence="2" ref="1">
    <original>QLQ</original>
    <variation>SCSNMTPDDFSSGEFL</variation>
    <location>
        <begin position="196"/>
        <end position="198"/>
    </location>
</feature>
<name>SLMA_SALTY</name>
<keyword id="KW-0131">Cell cycle</keyword>
<keyword id="KW-0132">Cell division</keyword>
<keyword id="KW-0175">Coiled coil</keyword>
<keyword id="KW-0963">Cytoplasm</keyword>
<keyword id="KW-0238">DNA-binding</keyword>
<keyword id="KW-1185">Reference proteome</keyword>
<comment type="function">
    <text evidence="1">Required for nucleoid occlusion (NO) phenomenon, which prevents Z-ring formation and cell division over the nucleoid. Acts as a DNA-associated cell division inhibitor that binds simultaneously chromosomal DNA and FtsZ, and disrupts the assembly of FtsZ polymers. SlmA-DNA-binding sequences (SBS) are dispersed on non-Ter regions of the chromosome, preventing FtsZ polymerization at these regions.</text>
</comment>
<comment type="subunit">
    <text evidence="1">Homodimer. Interacts with FtsZ.</text>
</comment>
<comment type="subcellular location">
    <subcellularLocation>
        <location evidence="1">Cytoplasm</location>
        <location evidence="1">Nucleoid</location>
    </subcellularLocation>
</comment>
<comment type="similarity">
    <text evidence="1">Belongs to the nucleoid occlusion factor SlmA family.</text>
</comment>
<protein>
    <recommendedName>
        <fullName evidence="1">Nucleoid occlusion factor SlmA</fullName>
    </recommendedName>
</protein>
<gene>
    <name evidence="1" type="primary">slmA</name>
    <name type="ordered locus">STM3732</name>
</gene>
<sequence>MAEKQTAKRNRREEILQSLALMLESSDGSQRITTAKLAASVGVSEAALYRHFPSKTRMFDSLIEFIEDSLITRINLILKDEKNTSTRLRLIVLLILGFGERNPGLTRILTGHALMFEQDRLQGRINQLFERIEAQLRQVLREKRMREGEGYTTDENLLASQLLAFCEGMLSRFVRSEFKYRPTDDFDARWPLIAAQLQ</sequence>
<accession>Q8ZL46</accession>
<accession>Q93V18</accession>
<reference key="1">
    <citation type="submission" date="2000-02" db="EMBL/GenBank/DDBJ databases">
        <authorList>
            <person name="van der Straaten T."/>
            <person name="Wesel A."/>
            <person name="van Dissel J.T."/>
        </authorList>
    </citation>
    <scope>NUCLEOTIDE SEQUENCE [GENOMIC DNA]</scope>
</reference>
<reference key="2">
    <citation type="journal article" date="2001" name="Nature">
        <title>Complete genome sequence of Salmonella enterica serovar Typhimurium LT2.</title>
        <authorList>
            <person name="McClelland M."/>
            <person name="Sanderson K.E."/>
            <person name="Spieth J."/>
            <person name="Clifton S.W."/>
            <person name="Latreille P."/>
            <person name="Courtney L."/>
            <person name="Porwollik S."/>
            <person name="Ali J."/>
            <person name="Dante M."/>
            <person name="Du F."/>
            <person name="Hou S."/>
            <person name="Layman D."/>
            <person name="Leonard S."/>
            <person name="Nguyen C."/>
            <person name="Scott K."/>
            <person name="Holmes A."/>
            <person name="Grewal N."/>
            <person name="Mulvaney E."/>
            <person name="Ryan E."/>
            <person name="Sun H."/>
            <person name="Florea L."/>
            <person name="Miller W."/>
            <person name="Stoneking T."/>
            <person name="Nhan M."/>
            <person name="Waterston R."/>
            <person name="Wilson R.K."/>
        </authorList>
    </citation>
    <scope>NUCLEOTIDE SEQUENCE [LARGE SCALE GENOMIC DNA]</scope>
    <source>
        <strain>LT2 / SGSC1412 / ATCC 700720</strain>
    </source>
</reference>
<dbReference type="EMBL" id="AF233062">
    <property type="protein sequence ID" value="AAF64285.1"/>
    <property type="molecule type" value="Genomic_DNA"/>
</dbReference>
<dbReference type="EMBL" id="AE006468">
    <property type="protein sequence ID" value="AAL22591.1"/>
    <property type="molecule type" value="Genomic_DNA"/>
</dbReference>
<dbReference type="RefSeq" id="WP_000818607.1">
    <property type="nucleotide sequence ID" value="NC_003197.2"/>
</dbReference>
<dbReference type="SMR" id="Q8ZL46"/>
<dbReference type="STRING" id="99287.STM3732"/>
<dbReference type="PaxDb" id="99287-STM3732"/>
<dbReference type="KEGG" id="stm:STM3732"/>
<dbReference type="PATRIC" id="fig|99287.12.peg.3948"/>
<dbReference type="HOGENOM" id="CLU_069356_5_0_6"/>
<dbReference type="OMA" id="KMYEGLI"/>
<dbReference type="PhylomeDB" id="Q8ZL46"/>
<dbReference type="BioCyc" id="SENT99287:STM3732-MONOMER"/>
<dbReference type="Proteomes" id="UP000001014">
    <property type="component" value="Chromosome"/>
</dbReference>
<dbReference type="GO" id="GO:0043590">
    <property type="term" value="C:bacterial nucleoid"/>
    <property type="evidence" value="ECO:0007669"/>
    <property type="project" value="UniProtKB-UniRule"/>
</dbReference>
<dbReference type="GO" id="GO:0005737">
    <property type="term" value="C:cytoplasm"/>
    <property type="evidence" value="ECO:0007669"/>
    <property type="project" value="UniProtKB-UniRule"/>
</dbReference>
<dbReference type="GO" id="GO:0003700">
    <property type="term" value="F:DNA-binding transcription factor activity"/>
    <property type="evidence" value="ECO:0000318"/>
    <property type="project" value="GO_Central"/>
</dbReference>
<dbReference type="GO" id="GO:0000976">
    <property type="term" value="F:transcription cis-regulatory region binding"/>
    <property type="evidence" value="ECO:0000318"/>
    <property type="project" value="GO_Central"/>
</dbReference>
<dbReference type="GO" id="GO:0051301">
    <property type="term" value="P:cell division"/>
    <property type="evidence" value="ECO:0007669"/>
    <property type="project" value="UniProtKB-KW"/>
</dbReference>
<dbReference type="GO" id="GO:0010974">
    <property type="term" value="P:negative regulation of division septum assembly"/>
    <property type="evidence" value="ECO:0007669"/>
    <property type="project" value="InterPro"/>
</dbReference>
<dbReference type="GO" id="GO:0006355">
    <property type="term" value="P:regulation of DNA-templated transcription"/>
    <property type="evidence" value="ECO:0000318"/>
    <property type="project" value="GO_Central"/>
</dbReference>
<dbReference type="FunFam" id="1.10.357.10:FF:000002">
    <property type="entry name" value="Nucleoid occlusion factor SlmA"/>
    <property type="match status" value="1"/>
</dbReference>
<dbReference type="Gene3D" id="1.10.357.10">
    <property type="entry name" value="Tetracycline Repressor, domain 2"/>
    <property type="match status" value="1"/>
</dbReference>
<dbReference type="HAMAP" id="MF_01839">
    <property type="entry name" value="NO_factor_SlmA"/>
    <property type="match status" value="1"/>
</dbReference>
<dbReference type="InterPro" id="IPR023772">
    <property type="entry name" value="DNA-bd_HTH_TetR-type_CS"/>
</dbReference>
<dbReference type="InterPro" id="IPR009057">
    <property type="entry name" value="Homeodomain-like_sf"/>
</dbReference>
<dbReference type="InterPro" id="IPR050109">
    <property type="entry name" value="HTH-type_TetR-like_transc_reg"/>
</dbReference>
<dbReference type="InterPro" id="IPR001647">
    <property type="entry name" value="HTH_TetR"/>
</dbReference>
<dbReference type="InterPro" id="IPR023769">
    <property type="entry name" value="NO_SlmA"/>
</dbReference>
<dbReference type="InterPro" id="IPR054580">
    <property type="entry name" value="SlmA-like_C"/>
</dbReference>
<dbReference type="InterPro" id="IPR036271">
    <property type="entry name" value="Tet_transcr_reg_TetR-rel_C_sf"/>
</dbReference>
<dbReference type="NCBIfam" id="NF007015">
    <property type="entry name" value="PRK09480.1"/>
    <property type="match status" value="1"/>
</dbReference>
<dbReference type="PANTHER" id="PTHR30055">
    <property type="entry name" value="HTH-TYPE TRANSCRIPTIONAL REGULATOR RUTR"/>
    <property type="match status" value="1"/>
</dbReference>
<dbReference type="PANTHER" id="PTHR30055:SF183">
    <property type="entry name" value="NUCLEOID OCCLUSION FACTOR SLMA"/>
    <property type="match status" value="1"/>
</dbReference>
<dbReference type="Pfam" id="PF22276">
    <property type="entry name" value="SlmA-like_C"/>
    <property type="match status" value="1"/>
</dbReference>
<dbReference type="Pfam" id="PF00440">
    <property type="entry name" value="TetR_N"/>
    <property type="match status" value="1"/>
</dbReference>
<dbReference type="SUPFAM" id="SSF46689">
    <property type="entry name" value="Homeodomain-like"/>
    <property type="match status" value="1"/>
</dbReference>
<dbReference type="SUPFAM" id="SSF48498">
    <property type="entry name" value="Tetracyclin repressor-like, C-terminal domain"/>
    <property type="match status" value="1"/>
</dbReference>
<dbReference type="PROSITE" id="PS01081">
    <property type="entry name" value="HTH_TETR_1"/>
    <property type="match status" value="1"/>
</dbReference>
<dbReference type="PROSITE" id="PS50977">
    <property type="entry name" value="HTH_TETR_2"/>
    <property type="match status" value="1"/>
</dbReference>
<proteinExistence type="inferred from homology"/>
<organism>
    <name type="scientific">Salmonella typhimurium (strain LT2 / SGSC1412 / ATCC 700720)</name>
    <dbReference type="NCBI Taxonomy" id="99287"/>
    <lineage>
        <taxon>Bacteria</taxon>
        <taxon>Pseudomonadati</taxon>
        <taxon>Pseudomonadota</taxon>
        <taxon>Gammaproteobacteria</taxon>
        <taxon>Enterobacterales</taxon>
        <taxon>Enterobacteriaceae</taxon>
        <taxon>Salmonella</taxon>
    </lineage>
</organism>
<evidence type="ECO:0000255" key="1">
    <source>
        <dbReference type="HAMAP-Rule" id="MF_01839"/>
    </source>
</evidence>
<evidence type="ECO:0000305" key="2"/>